<keyword id="KW-0548">Nucleotidyltransferase</keyword>
<keyword id="KW-1185">Reference proteome</keyword>
<keyword id="KW-0694">RNA-binding</keyword>
<keyword id="KW-0698">rRNA processing</keyword>
<keyword id="KW-0808">Transferase</keyword>
<keyword id="KW-0819">tRNA processing</keyword>
<keyword id="KW-0820">tRNA-binding</keyword>
<comment type="function">
    <text evidence="1">Phosphorolytic 3'-5' exoribonuclease that plays an important role in tRNA 3'-end maturation. Removes nucleotide residues following the 3'-CCA terminus of tRNAs; can also add nucleotides to the ends of RNA molecules by using nucleoside diphosphates as substrates, but this may not be physiologically important. Probably plays a role in initiation of 16S rRNA degradation (leading to ribosome degradation) during starvation.</text>
</comment>
<comment type="catalytic activity">
    <reaction evidence="1">
        <text>tRNA(n+1) + phosphate = tRNA(n) + a ribonucleoside 5'-diphosphate</text>
        <dbReference type="Rhea" id="RHEA:10628"/>
        <dbReference type="Rhea" id="RHEA-COMP:17343"/>
        <dbReference type="Rhea" id="RHEA-COMP:17344"/>
        <dbReference type="ChEBI" id="CHEBI:43474"/>
        <dbReference type="ChEBI" id="CHEBI:57930"/>
        <dbReference type="ChEBI" id="CHEBI:173114"/>
        <dbReference type="EC" id="2.7.7.56"/>
    </reaction>
</comment>
<comment type="subunit">
    <text evidence="1">Homohexameric ring arranged as a trimer of dimers.</text>
</comment>
<comment type="similarity">
    <text evidence="1">Belongs to the RNase PH family.</text>
</comment>
<accession>Q5KWI5</accession>
<name>RNPH_GEOKA</name>
<sequence>MMRADGRSSCELRPVHIHPHYMKHAEGSVLIEVGDTKVICTATVEEKVPSFMRGGGKGWITAEYGMLPRATEQRNVREASKGKVSGRTMEIQRLIGRALRSVVDLEQLGERTIWIDCDVIQADGGTRTASITGAYVALVLALAKLVEEGRLEALPIRDFLAATSVGIDPEHGVILDLDYNEDARAKVDMNVVMTGAGQFVEIQGTGEEAVFSRAELDELLEAAQIGIEQLIAVQRRALGEWAARIGEKKEAAEEDTE</sequence>
<feature type="chain" id="PRO_0000139894" description="Ribonuclease PH">
    <location>
        <begin position="1"/>
        <end position="257"/>
    </location>
</feature>
<feature type="binding site" evidence="1">
    <location>
        <position position="87"/>
    </location>
    <ligand>
        <name>phosphate</name>
        <dbReference type="ChEBI" id="CHEBI:43474"/>
        <note>substrate</note>
    </ligand>
</feature>
<feature type="binding site" evidence="1">
    <location>
        <begin position="125"/>
        <end position="127"/>
    </location>
    <ligand>
        <name>phosphate</name>
        <dbReference type="ChEBI" id="CHEBI:43474"/>
        <note>substrate</note>
    </ligand>
</feature>
<proteinExistence type="inferred from homology"/>
<gene>
    <name evidence="1" type="primary">rph</name>
    <name type="ordered locus">GK2666</name>
</gene>
<dbReference type="EC" id="2.7.7.56" evidence="1"/>
<dbReference type="EMBL" id="BA000043">
    <property type="protein sequence ID" value="BAD76951.1"/>
    <property type="molecule type" value="Genomic_DNA"/>
</dbReference>
<dbReference type="SMR" id="Q5KWI5"/>
<dbReference type="STRING" id="235909.GK2666"/>
<dbReference type="KEGG" id="gka:GK2666"/>
<dbReference type="eggNOG" id="COG0689">
    <property type="taxonomic scope" value="Bacteria"/>
</dbReference>
<dbReference type="HOGENOM" id="CLU_050858_0_0_9"/>
<dbReference type="Proteomes" id="UP000001172">
    <property type="component" value="Chromosome"/>
</dbReference>
<dbReference type="GO" id="GO:0000175">
    <property type="term" value="F:3'-5'-RNA exonuclease activity"/>
    <property type="evidence" value="ECO:0007669"/>
    <property type="project" value="UniProtKB-UniRule"/>
</dbReference>
<dbReference type="GO" id="GO:0000049">
    <property type="term" value="F:tRNA binding"/>
    <property type="evidence" value="ECO:0007669"/>
    <property type="project" value="UniProtKB-UniRule"/>
</dbReference>
<dbReference type="GO" id="GO:0009022">
    <property type="term" value="F:tRNA nucleotidyltransferase activity"/>
    <property type="evidence" value="ECO:0007669"/>
    <property type="project" value="UniProtKB-UniRule"/>
</dbReference>
<dbReference type="GO" id="GO:0016075">
    <property type="term" value="P:rRNA catabolic process"/>
    <property type="evidence" value="ECO:0007669"/>
    <property type="project" value="UniProtKB-UniRule"/>
</dbReference>
<dbReference type="GO" id="GO:0006364">
    <property type="term" value="P:rRNA processing"/>
    <property type="evidence" value="ECO:0007669"/>
    <property type="project" value="UniProtKB-KW"/>
</dbReference>
<dbReference type="GO" id="GO:0008033">
    <property type="term" value="P:tRNA processing"/>
    <property type="evidence" value="ECO:0007669"/>
    <property type="project" value="UniProtKB-UniRule"/>
</dbReference>
<dbReference type="CDD" id="cd11362">
    <property type="entry name" value="RNase_PH_bact"/>
    <property type="match status" value="1"/>
</dbReference>
<dbReference type="FunFam" id="3.30.230.70:FF:000003">
    <property type="entry name" value="Ribonuclease PH"/>
    <property type="match status" value="1"/>
</dbReference>
<dbReference type="Gene3D" id="3.30.230.70">
    <property type="entry name" value="GHMP Kinase, N-terminal domain"/>
    <property type="match status" value="1"/>
</dbReference>
<dbReference type="HAMAP" id="MF_00564">
    <property type="entry name" value="RNase_PH"/>
    <property type="match status" value="1"/>
</dbReference>
<dbReference type="InterPro" id="IPR001247">
    <property type="entry name" value="ExoRNase_PH_dom1"/>
</dbReference>
<dbReference type="InterPro" id="IPR015847">
    <property type="entry name" value="ExoRNase_PH_dom2"/>
</dbReference>
<dbReference type="InterPro" id="IPR036345">
    <property type="entry name" value="ExoRNase_PH_dom2_sf"/>
</dbReference>
<dbReference type="InterPro" id="IPR027408">
    <property type="entry name" value="PNPase/RNase_PH_dom_sf"/>
</dbReference>
<dbReference type="InterPro" id="IPR020568">
    <property type="entry name" value="Ribosomal_Su5_D2-typ_SF"/>
</dbReference>
<dbReference type="InterPro" id="IPR050080">
    <property type="entry name" value="RNase_PH"/>
</dbReference>
<dbReference type="InterPro" id="IPR002381">
    <property type="entry name" value="RNase_PH_bac-type"/>
</dbReference>
<dbReference type="InterPro" id="IPR018336">
    <property type="entry name" value="RNase_PH_CS"/>
</dbReference>
<dbReference type="NCBIfam" id="TIGR01966">
    <property type="entry name" value="RNasePH"/>
    <property type="match status" value="1"/>
</dbReference>
<dbReference type="PANTHER" id="PTHR11953">
    <property type="entry name" value="EXOSOME COMPLEX COMPONENT"/>
    <property type="match status" value="1"/>
</dbReference>
<dbReference type="PANTHER" id="PTHR11953:SF0">
    <property type="entry name" value="EXOSOME COMPLEX COMPONENT RRP41"/>
    <property type="match status" value="1"/>
</dbReference>
<dbReference type="Pfam" id="PF01138">
    <property type="entry name" value="RNase_PH"/>
    <property type="match status" value="1"/>
</dbReference>
<dbReference type="Pfam" id="PF03725">
    <property type="entry name" value="RNase_PH_C"/>
    <property type="match status" value="1"/>
</dbReference>
<dbReference type="SUPFAM" id="SSF55666">
    <property type="entry name" value="Ribonuclease PH domain 2-like"/>
    <property type="match status" value="1"/>
</dbReference>
<dbReference type="SUPFAM" id="SSF54211">
    <property type="entry name" value="Ribosomal protein S5 domain 2-like"/>
    <property type="match status" value="1"/>
</dbReference>
<dbReference type="PROSITE" id="PS01277">
    <property type="entry name" value="RIBONUCLEASE_PH"/>
    <property type="match status" value="1"/>
</dbReference>
<evidence type="ECO:0000255" key="1">
    <source>
        <dbReference type="HAMAP-Rule" id="MF_00564"/>
    </source>
</evidence>
<protein>
    <recommendedName>
        <fullName evidence="1">Ribonuclease PH</fullName>
        <shortName evidence="1">RNase PH</shortName>
        <ecNumber evidence="1">2.7.7.56</ecNumber>
    </recommendedName>
    <alternativeName>
        <fullName evidence="1">tRNA nucleotidyltransferase</fullName>
    </alternativeName>
</protein>
<organism>
    <name type="scientific">Geobacillus kaustophilus (strain HTA426)</name>
    <dbReference type="NCBI Taxonomy" id="235909"/>
    <lineage>
        <taxon>Bacteria</taxon>
        <taxon>Bacillati</taxon>
        <taxon>Bacillota</taxon>
        <taxon>Bacilli</taxon>
        <taxon>Bacillales</taxon>
        <taxon>Anoxybacillaceae</taxon>
        <taxon>Geobacillus</taxon>
        <taxon>Geobacillus thermoleovorans group</taxon>
    </lineage>
</organism>
<reference key="1">
    <citation type="journal article" date="2004" name="Nucleic Acids Res.">
        <title>Thermoadaptation trait revealed by the genome sequence of thermophilic Geobacillus kaustophilus.</title>
        <authorList>
            <person name="Takami H."/>
            <person name="Takaki Y."/>
            <person name="Chee G.-J."/>
            <person name="Nishi S."/>
            <person name="Shimamura S."/>
            <person name="Suzuki H."/>
            <person name="Matsui S."/>
            <person name="Uchiyama I."/>
        </authorList>
    </citation>
    <scope>NUCLEOTIDE SEQUENCE [LARGE SCALE GENOMIC DNA]</scope>
    <source>
        <strain>HTA426</strain>
    </source>
</reference>